<organism>
    <name type="scientific">Mycobacterium bovis (strain BCG / Tokyo 172 / ATCC 35737 / TMC 1019)</name>
    <dbReference type="NCBI Taxonomy" id="561275"/>
    <lineage>
        <taxon>Bacteria</taxon>
        <taxon>Bacillati</taxon>
        <taxon>Actinomycetota</taxon>
        <taxon>Actinomycetes</taxon>
        <taxon>Mycobacteriales</taxon>
        <taxon>Mycobacteriaceae</taxon>
        <taxon>Mycobacterium</taxon>
        <taxon>Mycobacterium tuberculosis complex</taxon>
    </lineage>
</organism>
<comment type="function">
    <text evidence="1">Catalyzes the transfer of a dimethylallyl group onto the adenine at position 37 in tRNAs that read codons beginning with uridine, leading to the formation of N6-(dimethylallyl)adenosine (i(6)A).</text>
</comment>
<comment type="catalytic activity">
    <reaction evidence="1">
        <text>adenosine(37) in tRNA + dimethylallyl diphosphate = N(6)-dimethylallyladenosine(37) in tRNA + diphosphate</text>
        <dbReference type="Rhea" id="RHEA:26482"/>
        <dbReference type="Rhea" id="RHEA-COMP:10162"/>
        <dbReference type="Rhea" id="RHEA-COMP:10375"/>
        <dbReference type="ChEBI" id="CHEBI:33019"/>
        <dbReference type="ChEBI" id="CHEBI:57623"/>
        <dbReference type="ChEBI" id="CHEBI:74411"/>
        <dbReference type="ChEBI" id="CHEBI:74415"/>
        <dbReference type="EC" id="2.5.1.75"/>
    </reaction>
</comment>
<comment type="cofactor">
    <cofactor evidence="1">
        <name>Mg(2+)</name>
        <dbReference type="ChEBI" id="CHEBI:18420"/>
    </cofactor>
</comment>
<comment type="subunit">
    <text evidence="1">Monomer.</text>
</comment>
<comment type="similarity">
    <text evidence="1">Belongs to the IPP transferase family.</text>
</comment>
<feature type="chain" id="PRO_1000191861" description="tRNA dimethylallyltransferase">
    <location>
        <begin position="1"/>
        <end position="314"/>
    </location>
</feature>
<feature type="binding site" evidence="1">
    <location>
        <begin position="8"/>
        <end position="15"/>
    </location>
    <ligand>
        <name>ATP</name>
        <dbReference type="ChEBI" id="CHEBI:30616"/>
    </ligand>
</feature>
<feature type="binding site" evidence="1">
    <location>
        <begin position="10"/>
        <end position="15"/>
    </location>
    <ligand>
        <name>substrate</name>
    </ligand>
</feature>
<feature type="site" description="Interaction with substrate tRNA" evidence="1">
    <location>
        <position position="103"/>
    </location>
</feature>
<feature type="site" description="Interaction with substrate tRNA" evidence="1">
    <location>
        <position position="124"/>
    </location>
</feature>
<keyword id="KW-0067">ATP-binding</keyword>
<keyword id="KW-0460">Magnesium</keyword>
<keyword id="KW-0547">Nucleotide-binding</keyword>
<keyword id="KW-0808">Transferase</keyword>
<keyword id="KW-0819">tRNA processing</keyword>
<proteinExistence type="inferred from homology"/>
<sequence length="314" mass="34446">MRPLAIIGPTGAGKSQLALDVAARLGARVSVEIVNADAMQLYRGMDIGTAKLPVSERRGIPHHQLDVLDVTETATVARYQRAAAADIEAIAARGAVPVVVGGSMLYVQSLLDDWSFPATDPSVRARWERRLAEVGVDRLHAELARRDPAAAAAILPTDARRTVRALEVVELTGQPFAASAPRIGAPRWDTVIVGLDCQTTILDERLARRTDLMFDQGLVEEVRTLLRNGLREGVTASRALGYAQVIAALDAGAGADMMRAAREQTYLGTRRYVRRQRSWFRRDHRVHWLDAGVASSPDRARLVDDAVRLWRHVT</sequence>
<name>MIAA_MYCBT</name>
<gene>
    <name evidence="1" type="primary">miaA</name>
    <name type="ordered locus">JTY_2734</name>
</gene>
<evidence type="ECO:0000255" key="1">
    <source>
        <dbReference type="HAMAP-Rule" id="MF_00185"/>
    </source>
</evidence>
<protein>
    <recommendedName>
        <fullName evidence="1">tRNA dimethylallyltransferase</fullName>
        <ecNumber evidence="1">2.5.1.75</ecNumber>
    </recommendedName>
    <alternativeName>
        <fullName evidence="1">Dimethylallyl diphosphate:tRNA dimethylallyltransferase</fullName>
        <shortName evidence="1">DMAPP:tRNA dimethylallyltransferase</shortName>
        <shortName evidence="1">DMATase</shortName>
    </alternativeName>
    <alternativeName>
        <fullName evidence="1">Isopentenyl-diphosphate:tRNA isopentenyltransferase</fullName>
        <shortName evidence="1">IPP transferase</shortName>
        <shortName evidence="1">IPPT</shortName>
        <shortName evidence="1">IPTase</shortName>
    </alternativeName>
</protein>
<accession>C1AFI6</accession>
<dbReference type="EC" id="2.5.1.75" evidence="1"/>
<dbReference type="EMBL" id="AP010918">
    <property type="protein sequence ID" value="BAH27015.1"/>
    <property type="molecule type" value="Genomic_DNA"/>
</dbReference>
<dbReference type="RefSeq" id="WP_003413989.1">
    <property type="nucleotide sequence ID" value="NZ_CP014566.1"/>
</dbReference>
<dbReference type="SMR" id="C1AFI6"/>
<dbReference type="GeneID" id="45426714"/>
<dbReference type="KEGG" id="mbt:JTY_2734"/>
<dbReference type="HOGENOM" id="CLU_032616_0_1_11"/>
<dbReference type="GO" id="GO:0005524">
    <property type="term" value="F:ATP binding"/>
    <property type="evidence" value="ECO:0007669"/>
    <property type="project" value="UniProtKB-UniRule"/>
</dbReference>
<dbReference type="GO" id="GO:0052381">
    <property type="term" value="F:tRNA dimethylallyltransferase activity"/>
    <property type="evidence" value="ECO:0007669"/>
    <property type="project" value="UniProtKB-UniRule"/>
</dbReference>
<dbReference type="GO" id="GO:0006400">
    <property type="term" value="P:tRNA modification"/>
    <property type="evidence" value="ECO:0007669"/>
    <property type="project" value="TreeGrafter"/>
</dbReference>
<dbReference type="FunFam" id="1.10.20.140:FF:000001">
    <property type="entry name" value="tRNA dimethylallyltransferase"/>
    <property type="match status" value="1"/>
</dbReference>
<dbReference type="Gene3D" id="1.10.20.140">
    <property type="match status" value="1"/>
</dbReference>
<dbReference type="Gene3D" id="3.40.50.300">
    <property type="entry name" value="P-loop containing nucleotide triphosphate hydrolases"/>
    <property type="match status" value="1"/>
</dbReference>
<dbReference type="HAMAP" id="MF_00185">
    <property type="entry name" value="IPP_trans"/>
    <property type="match status" value="1"/>
</dbReference>
<dbReference type="InterPro" id="IPR039657">
    <property type="entry name" value="Dimethylallyltransferase"/>
</dbReference>
<dbReference type="InterPro" id="IPR018022">
    <property type="entry name" value="IPT"/>
</dbReference>
<dbReference type="InterPro" id="IPR027417">
    <property type="entry name" value="P-loop_NTPase"/>
</dbReference>
<dbReference type="NCBIfam" id="TIGR00174">
    <property type="entry name" value="miaA"/>
    <property type="match status" value="1"/>
</dbReference>
<dbReference type="PANTHER" id="PTHR11088">
    <property type="entry name" value="TRNA DIMETHYLALLYLTRANSFERASE"/>
    <property type="match status" value="1"/>
</dbReference>
<dbReference type="PANTHER" id="PTHR11088:SF60">
    <property type="entry name" value="TRNA DIMETHYLALLYLTRANSFERASE"/>
    <property type="match status" value="1"/>
</dbReference>
<dbReference type="Pfam" id="PF01715">
    <property type="entry name" value="IPPT"/>
    <property type="match status" value="1"/>
</dbReference>
<dbReference type="SUPFAM" id="SSF52540">
    <property type="entry name" value="P-loop containing nucleoside triphosphate hydrolases"/>
    <property type="match status" value="1"/>
</dbReference>
<reference key="1">
    <citation type="journal article" date="2009" name="Vaccine">
        <title>Whole genome sequence analysis of Mycobacterium bovis bacillus Calmette-Guerin (BCG) Tokyo 172: a comparative study of BCG vaccine substrains.</title>
        <authorList>
            <person name="Seki M."/>
            <person name="Honda I."/>
            <person name="Fujita I."/>
            <person name="Yano I."/>
            <person name="Yamamoto S."/>
            <person name="Koyama A."/>
        </authorList>
    </citation>
    <scope>NUCLEOTIDE SEQUENCE [LARGE SCALE GENOMIC DNA]</scope>
    <source>
        <strain>BCG / Tokyo 172 / ATCC 35737 / TMC 1019</strain>
    </source>
</reference>